<name>RL20_GRABC</name>
<comment type="function">
    <text evidence="1">Binds directly to 23S ribosomal RNA and is necessary for the in vitro assembly process of the 50S ribosomal subunit. It is not involved in the protein synthesizing functions of that subunit.</text>
</comment>
<comment type="similarity">
    <text evidence="1">Belongs to the bacterial ribosomal protein bL20 family.</text>
</comment>
<reference key="1">
    <citation type="journal article" date="2007" name="J. Bacteriol.">
        <title>Genome sequence analysis of the emerging human pathogenic acetic acid bacterium Granulibacter bethesdensis.</title>
        <authorList>
            <person name="Greenberg D.E."/>
            <person name="Porcella S.F."/>
            <person name="Zelazny A.M."/>
            <person name="Virtaneva K."/>
            <person name="Sturdevant D.E."/>
            <person name="Kupko J.J. III"/>
            <person name="Barbian K.D."/>
            <person name="Babar A."/>
            <person name="Dorward D.W."/>
            <person name="Holland S.M."/>
        </authorList>
    </citation>
    <scope>NUCLEOTIDE SEQUENCE [LARGE SCALE GENOMIC DNA]</scope>
    <source>
        <strain>ATCC BAA-1260 / CGDNIH1</strain>
    </source>
</reference>
<organism>
    <name type="scientific">Granulibacter bethesdensis (strain ATCC BAA-1260 / CGDNIH1)</name>
    <dbReference type="NCBI Taxonomy" id="391165"/>
    <lineage>
        <taxon>Bacteria</taxon>
        <taxon>Pseudomonadati</taxon>
        <taxon>Pseudomonadota</taxon>
        <taxon>Alphaproteobacteria</taxon>
        <taxon>Acetobacterales</taxon>
        <taxon>Acetobacteraceae</taxon>
        <taxon>Granulibacter</taxon>
    </lineage>
</organism>
<gene>
    <name evidence="1" type="primary">rplT</name>
    <name type="ordered locus">GbCGDNIH1_1504</name>
</gene>
<protein>
    <recommendedName>
        <fullName evidence="1">Large ribosomal subunit protein bL20</fullName>
    </recommendedName>
    <alternativeName>
        <fullName evidence="2">50S ribosomal protein L20</fullName>
    </alternativeName>
</protein>
<proteinExistence type="inferred from homology"/>
<sequence>MARVKRGVTTHARHKKVLKASKGFFGRSSTNYRIALERLEKSLQYAYRDRRVKKRDFRALWIQRINAAVREHGMTYSVFINGLKKAEIDMDRKVLAAIAFDDAAAFAEIVKKVQGALAA</sequence>
<evidence type="ECO:0000255" key="1">
    <source>
        <dbReference type="HAMAP-Rule" id="MF_00382"/>
    </source>
</evidence>
<evidence type="ECO:0000305" key="2"/>
<accession>Q0BS00</accession>
<keyword id="KW-1185">Reference proteome</keyword>
<keyword id="KW-0687">Ribonucleoprotein</keyword>
<keyword id="KW-0689">Ribosomal protein</keyword>
<keyword id="KW-0694">RNA-binding</keyword>
<keyword id="KW-0699">rRNA-binding</keyword>
<feature type="chain" id="PRO_1000048985" description="Large ribosomal subunit protein bL20">
    <location>
        <begin position="1"/>
        <end position="119"/>
    </location>
</feature>
<dbReference type="EMBL" id="CP000394">
    <property type="protein sequence ID" value="ABI62402.1"/>
    <property type="molecule type" value="Genomic_DNA"/>
</dbReference>
<dbReference type="RefSeq" id="WP_011632206.1">
    <property type="nucleotide sequence ID" value="NC_008343.2"/>
</dbReference>
<dbReference type="SMR" id="Q0BS00"/>
<dbReference type="STRING" id="391165.GbCGDNIH1_1504"/>
<dbReference type="GeneID" id="69745743"/>
<dbReference type="KEGG" id="gbe:GbCGDNIH1_1504"/>
<dbReference type="eggNOG" id="COG0292">
    <property type="taxonomic scope" value="Bacteria"/>
</dbReference>
<dbReference type="HOGENOM" id="CLU_123265_0_1_5"/>
<dbReference type="OrthoDB" id="9808966at2"/>
<dbReference type="Proteomes" id="UP000001963">
    <property type="component" value="Chromosome"/>
</dbReference>
<dbReference type="GO" id="GO:1990904">
    <property type="term" value="C:ribonucleoprotein complex"/>
    <property type="evidence" value="ECO:0007669"/>
    <property type="project" value="UniProtKB-KW"/>
</dbReference>
<dbReference type="GO" id="GO:0005840">
    <property type="term" value="C:ribosome"/>
    <property type="evidence" value="ECO:0007669"/>
    <property type="project" value="UniProtKB-KW"/>
</dbReference>
<dbReference type="GO" id="GO:0019843">
    <property type="term" value="F:rRNA binding"/>
    <property type="evidence" value="ECO:0007669"/>
    <property type="project" value="UniProtKB-UniRule"/>
</dbReference>
<dbReference type="GO" id="GO:0003735">
    <property type="term" value="F:structural constituent of ribosome"/>
    <property type="evidence" value="ECO:0007669"/>
    <property type="project" value="InterPro"/>
</dbReference>
<dbReference type="GO" id="GO:0000027">
    <property type="term" value="P:ribosomal large subunit assembly"/>
    <property type="evidence" value="ECO:0007669"/>
    <property type="project" value="UniProtKB-UniRule"/>
</dbReference>
<dbReference type="GO" id="GO:0006412">
    <property type="term" value="P:translation"/>
    <property type="evidence" value="ECO:0007669"/>
    <property type="project" value="InterPro"/>
</dbReference>
<dbReference type="CDD" id="cd07026">
    <property type="entry name" value="Ribosomal_L20"/>
    <property type="match status" value="1"/>
</dbReference>
<dbReference type="FunFam" id="1.10.1900.20:FF:000001">
    <property type="entry name" value="50S ribosomal protein L20"/>
    <property type="match status" value="1"/>
</dbReference>
<dbReference type="Gene3D" id="6.10.160.10">
    <property type="match status" value="1"/>
</dbReference>
<dbReference type="Gene3D" id="1.10.1900.20">
    <property type="entry name" value="Ribosomal protein L20"/>
    <property type="match status" value="1"/>
</dbReference>
<dbReference type="HAMAP" id="MF_00382">
    <property type="entry name" value="Ribosomal_bL20"/>
    <property type="match status" value="1"/>
</dbReference>
<dbReference type="InterPro" id="IPR005813">
    <property type="entry name" value="Ribosomal_bL20"/>
</dbReference>
<dbReference type="InterPro" id="IPR049946">
    <property type="entry name" value="RIBOSOMAL_L20_CS"/>
</dbReference>
<dbReference type="InterPro" id="IPR035566">
    <property type="entry name" value="Ribosomal_protein_bL20_C"/>
</dbReference>
<dbReference type="NCBIfam" id="TIGR01032">
    <property type="entry name" value="rplT_bact"/>
    <property type="match status" value="1"/>
</dbReference>
<dbReference type="PANTHER" id="PTHR10986">
    <property type="entry name" value="39S RIBOSOMAL PROTEIN L20"/>
    <property type="match status" value="1"/>
</dbReference>
<dbReference type="Pfam" id="PF00453">
    <property type="entry name" value="Ribosomal_L20"/>
    <property type="match status" value="1"/>
</dbReference>
<dbReference type="PRINTS" id="PR00062">
    <property type="entry name" value="RIBOSOMALL20"/>
</dbReference>
<dbReference type="SUPFAM" id="SSF74731">
    <property type="entry name" value="Ribosomal protein L20"/>
    <property type="match status" value="1"/>
</dbReference>
<dbReference type="PROSITE" id="PS00937">
    <property type="entry name" value="RIBOSOMAL_L20"/>
    <property type="match status" value="1"/>
</dbReference>